<accession>Q9LKF9</accession>
<accession>Q9FF92</accession>
<reference key="1">
    <citation type="journal article" date="2003" name="Plant Mol. Biol.">
        <title>An interaction between an Arabidopsis poly(A) polymerase and a homologue of the 100 kDa subunit of CPSF.</title>
        <authorList>
            <person name="Elliott B.J."/>
            <person name="Dattaroy T."/>
            <person name="Meeks-Midkiff L.R."/>
            <person name="Forbes K.P."/>
            <person name="Hunt A.G."/>
        </authorList>
    </citation>
    <scope>NUCLEOTIDE SEQUENCE [MRNA]</scope>
</reference>
<reference key="2">
    <citation type="journal article" date="1997" name="DNA Res.">
        <title>Structural analysis of Arabidopsis thaliana chromosome 5. I. Sequence features of the 1.6 Mb regions covered by twenty physically assigned P1 clones.</title>
        <authorList>
            <person name="Sato S."/>
            <person name="Kotani H."/>
            <person name="Nakamura Y."/>
            <person name="Kaneko T."/>
            <person name="Asamizu E."/>
            <person name="Fukami M."/>
            <person name="Miyajima N."/>
            <person name="Tabata S."/>
        </authorList>
    </citation>
    <scope>NUCLEOTIDE SEQUENCE [LARGE SCALE GENOMIC DNA]</scope>
    <source>
        <strain>cv. Columbia</strain>
    </source>
</reference>
<reference key="3">
    <citation type="journal article" date="2017" name="Plant J.">
        <title>Araport11: a complete reannotation of the Arabidopsis thaliana reference genome.</title>
        <authorList>
            <person name="Cheng C.Y."/>
            <person name="Krishnakumar V."/>
            <person name="Chan A.P."/>
            <person name="Thibaud-Nissen F."/>
            <person name="Schobel S."/>
            <person name="Town C.D."/>
        </authorList>
    </citation>
    <scope>GENOME REANNOTATION</scope>
    <source>
        <strain>cv. Columbia</strain>
    </source>
</reference>
<reference key="4">
    <citation type="journal article" date="2003" name="Science">
        <title>Empirical analysis of transcriptional activity in the Arabidopsis genome.</title>
        <authorList>
            <person name="Yamada K."/>
            <person name="Lim J."/>
            <person name="Dale J.M."/>
            <person name="Chen H."/>
            <person name="Shinn P."/>
            <person name="Palm C.J."/>
            <person name="Southwick A.M."/>
            <person name="Wu H.C."/>
            <person name="Kim C.J."/>
            <person name="Nguyen M."/>
            <person name="Pham P.K."/>
            <person name="Cheuk R.F."/>
            <person name="Karlin-Newmann G."/>
            <person name="Liu S.X."/>
            <person name="Lam B."/>
            <person name="Sakano H."/>
            <person name="Wu T."/>
            <person name="Yu G."/>
            <person name="Miranda M."/>
            <person name="Quach H.L."/>
            <person name="Tripp M."/>
            <person name="Chang C.H."/>
            <person name="Lee J.M."/>
            <person name="Toriumi M.J."/>
            <person name="Chan M.M."/>
            <person name="Tang C.C."/>
            <person name="Onodera C.S."/>
            <person name="Deng J.M."/>
            <person name="Akiyama K."/>
            <person name="Ansari Y."/>
            <person name="Arakawa T."/>
            <person name="Banh J."/>
            <person name="Banno F."/>
            <person name="Bowser L."/>
            <person name="Brooks S.Y."/>
            <person name="Carninci P."/>
            <person name="Chao Q."/>
            <person name="Choy N."/>
            <person name="Enju A."/>
            <person name="Goldsmith A.D."/>
            <person name="Gurjal M."/>
            <person name="Hansen N.F."/>
            <person name="Hayashizaki Y."/>
            <person name="Johnson-Hopson C."/>
            <person name="Hsuan V.W."/>
            <person name="Iida K."/>
            <person name="Karnes M."/>
            <person name="Khan S."/>
            <person name="Koesema E."/>
            <person name="Ishida J."/>
            <person name="Jiang P.X."/>
            <person name="Jones T."/>
            <person name="Kawai J."/>
            <person name="Kamiya A."/>
            <person name="Meyers C."/>
            <person name="Nakajima M."/>
            <person name="Narusaka M."/>
            <person name="Seki M."/>
            <person name="Sakurai T."/>
            <person name="Satou M."/>
            <person name="Tamse R."/>
            <person name="Vaysberg M."/>
            <person name="Wallender E.K."/>
            <person name="Wong C."/>
            <person name="Yamamura Y."/>
            <person name="Yuan S."/>
            <person name="Shinozaki K."/>
            <person name="Davis R.W."/>
            <person name="Theologis A."/>
            <person name="Ecker J.R."/>
        </authorList>
    </citation>
    <scope>NUCLEOTIDE SEQUENCE [LARGE SCALE MRNA]</scope>
    <source>
        <strain>cv. Columbia</strain>
    </source>
</reference>
<reference key="5">
    <citation type="journal article" date="2006" name="Proc. Natl. Acad. Sci. U.S.A.">
        <title>Defective RNA processing enhances RNA silencing and influences flowering of Arabidopsis.</title>
        <authorList>
            <person name="Herr A.J."/>
            <person name="Molnar A."/>
            <person name="Jones A."/>
            <person name="Baulcombe D.C."/>
        </authorList>
    </citation>
    <scope>FUNCTION</scope>
    <scope>DISRUPTION PHENOTYPE</scope>
    <scope>SUBUNIT</scope>
</reference>
<reference key="6">
    <citation type="journal article" date="2008" name="BMC Genomics">
        <title>Arabidopsis mRNA polyadenylation machinery: comprehensive analysis of protein-protein interactions and gene expression profiling.</title>
        <authorList>
            <person name="Hunt A.G."/>
            <person name="Xu R."/>
            <person name="Addepalli B."/>
            <person name="Rao S."/>
            <person name="Forbes K.P."/>
            <person name="Meeks L.R."/>
            <person name="Xing D."/>
            <person name="Mo M."/>
            <person name="Zhao H."/>
            <person name="Bandyopadhyay A."/>
            <person name="Dampanaboina L."/>
            <person name="Marion A."/>
            <person name="Von Lanken C."/>
            <person name="Li Q.Q."/>
        </authorList>
    </citation>
    <scope>INTERACTION WITH CPSF160; PAPS2; CSTF50; FY AND CPSF30</scope>
    <scope>GENE FAMILY</scope>
    <scope>NOMENCLATURE</scope>
</reference>
<reference key="7">
    <citation type="journal article" date="2009" name="BMC Cell Biol.">
        <title>Distinctive interactions of the Arabidopsis homolog of the 30 kD subunit of the cleavage and polyadenylation specificity factor (AtCPSF30) with other polyadenylation factor subunits.</title>
        <authorList>
            <person name="Rao S."/>
            <person name="Dinkins R.D."/>
            <person name="Hunt A.G."/>
        </authorList>
    </citation>
    <scope>SUBCELLULAR LOCATION</scope>
    <scope>INTERACTION WITH CPSF30</scope>
</reference>
<reference key="8">
    <citation type="journal article" date="2009" name="Plant Physiol.">
        <title>Unique features of plant cleavage and polyadenylation specificity factor revealed by proteomic studies.</title>
        <authorList>
            <person name="Zhao H."/>
            <person name="Xing D."/>
            <person name="Li Q.Q."/>
        </authorList>
    </citation>
    <scope>COMPONENT OF CPSF COMPLEX</scope>
</reference>
<reference key="9">
    <citation type="journal article" date="2009" name="Proc. Natl. Acad. Sci. U.S.A.">
        <title>Altered interactions within FY/AtCPSF complexes required for Arabidopsis FCA-mediated chromatin silencing.</title>
        <authorList>
            <person name="Manzano D."/>
            <person name="Marquardt S."/>
            <person name="Jones A.M."/>
            <person name="Baurle I."/>
            <person name="Liu F."/>
            <person name="Dean C."/>
        </authorList>
    </citation>
    <scope>INTERACTION WITH FY</scope>
</reference>
<comment type="function">
    <text evidence="1 3">CPSF plays a key role in pre-mRNA 3'-end formation, recognizing the AAUAAA signal sequence and interacting with poly(A)polymerase and other factors to bring about cleavage and poly(A) addition (By similarity). Required for antisense-RNA-mediated gene silencing (PubMed:17008405).</text>
</comment>
<comment type="subunit">
    <text evidence="3 4 5 6">Component of the CPSF complex, at least composed of CPSF160, CPSF100, CPSF73-I, CPSF73-II, CPSF30, FY and FIPS5. Forms a complex with cleavage and polyadenylation specificity factor (CPSF) subunits FY, PAPS2, CSTF50, CPSF30, CPSF73-I, CPSF73-II and CPSF160.</text>
</comment>
<comment type="interaction">
    <interactant intactId="EBI-1775444">
        <id>Q9LKF9</id>
    </interactant>
    <interactant intactId="EBI-1775436">
        <id>Q9FGR0</id>
        <label>CPSF160</label>
    </interactant>
    <organismsDiffer>false</organismsDiffer>
    <experiments>4</experiments>
</comment>
<comment type="interaction">
    <interactant intactId="EBI-1775444">
        <id>Q9LKF9</id>
    </interactant>
    <interactant intactId="EBI-962511">
        <id>A9LNK9</id>
        <label>CPSF30</label>
    </interactant>
    <organismsDiffer>false</organismsDiffer>
    <experiments>3</experiments>
</comment>
<comment type="interaction">
    <interactant intactId="EBI-1775444">
        <id>Q9LKF9</id>
    </interactant>
    <interactant intactId="EBI-1775464">
        <id>Q9C952</id>
        <label>CPSF73-I</label>
    </interactant>
    <organismsDiffer>false</organismsDiffer>
    <experiments>4</experiments>
</comment>
<comment type="interaction">
    <interactant intactId="EBI-1775444">
        <id>Q9LKF9</id>
    </interactant>
    <interactant intactId="EBI-1775477">
        <id>Q8GUU3</id>
        <label>CPSF73-II</label>
    </interactant>
    <organismsDiffer>false</organismsDiffer>
    <experiments>3</experiments>
</comment>
<comment type="interaction">
    <interactant intactId="EBI-1775444">
        <id>Q9LKF9</id>
    </interactant>
    <interactant intactId="EBI-1632908">
        <id>Q6NLV4</id>
        <label>FY</label>
    </interactant>
    <organismsDiffer>false</organismsDiffer>
    <experiments>3</experiments>
</comment>
<comment type="interaction">
    <interactant intactId="EBI-1775444">
        <id>Q9LKF9</id>
    </interactant>
    <interactant intactId="EBI-1775513">
        <id>O82312</id>
        <label>PAPS2</label>
    </interactant>
    <organismsDiffer>false</organismsDiffer>
    <experiments>5</experiments>
</comment>
<comment type="subcellular location">
    <subcellularLocation>
        <location evidence="8">Nucleus</location>
    </subcellularLocation>
    <subcellularLocation>
        <location evidence="6">Cytoplasm</location>
    </subcellularLocation>
    <text evidence="6">Localized in the cytoplasm when associated with CPSF30.</text>
</comment>
<comment type="disruption phenotype">
    <text evidence="3">Impaired antisense-RNA-mediated gene silencing. Early flowering.</text>
</comment>
<comment type="similarity">
    <text evidence="8">Belongs to the metallo-beta-lactamase superfamily. RNA-metabolizing metallo-beta-lactamase-like family. CPSF2/YSH1 subfamily.</text>
</comment>
<name>CPSF2_ARATH</name>
<proteinExistence type="evidence at protein level"/>
<gene>
    <name type="primary">CPSF100</name>
    <name type="synonym">EMB1265</name>
    <name evidence="7" type="synonym">ESP5</name>
    <name evidence="9" type="ordered locus">At5g23880</name>
    <name evidence="10" type="ORF">MRO11.8</name>
</gene>
<dbReference type="EMBL" id="AF283277">
    <property type="protein sequence ID" value="AAF82809.1"/>
    <property type="molecule type" value="mRNA"/>
</dbReference>
<dbReference type="EMBL" id="AB005244">
    <property type="protein sequence ID" value="BAB10061.1"/>
    <property type="molecule type" value="Genomic_DNA"/>
</dbReference>
<dbReference type="EMBL" id="CP002688">
    <property type="protein sequence ID" value="AED93228.1"/>
    <property type="molecule type" value="Genomic_DNA"/>
</dbReference>
<dbReference type="EMBL" id="AY034982">
    <property type="protein sequence ID" value="AAK59487.1"/>
    <property type="molecule type" value="mRNA"/>
</dbReference>
<dbReference type="EMBL" id="BT004374">
    <property type="protein sequence ID" value="AAO42368.1"/>
    <property type="molecule type" value="mRNA"/>
</dbReference>
<dbReference type="RefSeq" id="NP_197776.1">
    <property type="nucleotide sequence ID" value="NM_122293.4"/>
</dbReference>
<dbReference type="SMR" id="Q9LKF9"/>
<dbReference type="BioGRID" id="17728">
    <property type="interactions" value="20"/>
</dbReference>
<dbReference type="DIP" id="DIP-40385N"/>
<dbReference type="FunCoup" id="Q9LKF9">
    <property type="interactions" value="4691"/>
</dbReference>
<dbReference type="IntAct" id="Q9LKF9">
    <property type="interactions" value="10"/>
</dbReference>
<dbReference type="STRING" id="3702.Q9LKF9"/>
<dbReference type="GlyGen" id="Q9LKF9">
    <property type="glycosylation" value="1 site"/>
</dbReference>
<dbReference type="iPTMnet" id="Q9LKF9"/>
<dbReference type="PaxDb" id="3702-AT5G23880.1"/>
<dbReference type="ProteomicsDB" id="222618"/>
<dbReference type="DNASU" id="832453"/>
<dbReference type="EnsemblPlants" id="AT5G23880.1">
    <property type="protein sequence ID" value="AT5G23880.1"/>
    <property type="gene ID" value="AT5G23880"/>
</dbReference>
<dbReference type="GeneID" id="832453"/>
<dbReference type="Gramene" id="AT5G23880.1">
    <property type="protein sequence ID" value="AT5G23880.1"/>
    <property type="gene ID" value="AT5G23880"/>
</dbReference>
<dbReference type="KEGG" id="ath:AT5G23880"/>
<dbReference type="Araport" id="AT5G23880"/>
<dbReference type="TAIR" id="AT5G23880">
    <property type="gene designation" value="CPSF100"/>
</dbReference>
<dbReference type="eggNOG" id="KOG1135">
    <property type="taxonomic scope" value="Eukaryota"/>
</dbReference>
<dbReference type="HOGENOM" id="CLU_002227_3_0_1"/>
<dbReference type="InParanoid" id="Q9LKF9"/>
<dbReference type="OMA" id="QSRHNME"/>
<dbReference type="PhylomeDB" id="Q9LKF9"/>
<dbReference type="PRO" id="PR:Q9LKF9"/>
<dbReference type="Proteomes" id="UP000006548">
    <property type="component" value="Chromosome 5"/>
</dbReference>
<dbReference type="ExpressionAtlas" id="Q9LKF9">
    <property type="expression patterns" value="baseline and differential"/>
</dbReference>
<dbReference type="GO" id="GO:0005737">
    <property type="term" value="C:cytoplasm"/>
    <property type="evidence" value="ECO:0000314"/>
    <property type="project" value="UniProtKB"/>
</dbReference>
<dbReference type="GO" id="GO:0005847">
    <property type="term" value="C:mRNA cleavage and polyadenylation specificity factor complex"/>
    <property type="evidence" value="ECO:0000250"/>
    <property type="project" value="TAIR"/>
</dbReference>
<dbReference type="GO" id="GO:0005634">
    <property type="term" value="C:nucleus"/>
    <property type="evidence" value="ECO:0000314"/>
    <property type="project" value="TAIR"/>
</dbReference>
<dbReference type="GO" id="GO:0009506">
    <property type="term" value="C:plasmodesma"/>
    <property type="evidence" value="ECO:0007005"/>
    <property type="project" value="TAIR"/>
</dbReference>
<dbReference type="GO" id="GO:0003723">
    <property type="term" value="F:RNA binding"/>
    <property type="evidence" value="ECO:0007669"/>
    <property type="project" value="UniProtKB-KW"/>
</dbReference>
<dbReference type="GO" id="GO:0006398">
    <property type="term" value="P:mRNA 3'-end processing by stem-loop binding and cleavage"/>
    <property type="evidence" value="ECO:0007669"/>
    <property type="project" value="InterPro"/>
</dbReference>
<dbReference type="GO" id="GO:0035194">
    <property type="term" value="P:regulatory ncRNA-mediated post-transcriptional gene silencing"/>
    <property type="evidence" value="ECO:0000315"/>
    <property type="project" value="TAIR"/>
</dbReference>
<dbReference type="CDD" id="cd16293">
    <property type="entry name" value="CPSF2-like_MBL-fold"/>
    <property type="match status" value="1"/>
</dbReference>
<dbReference type="FunFam" id="3.60.15.10:FF:000008">
    <property type="entry name" value="Cleavage and polyadenylation specificity factor subunit 2"/>
    <property type="match status" value="1"/>
</dbReference>
<dbReference type="Gene3D" id="3.60.15.10">
    <property type="entry name" value="Ribonuclease Z/Hydroxyacylglutathione hydrolase-like"/>
    <property type="match status" value="1"/>
</dbReference>
<dbReference type="InterPro" id="IPR022712">
    <property type="entry name" value="Beta_Casp"/>
</dbReference>
<dbReference type="InterPro" id="IPR027075">
    <property type="entry name" value="CPSF2"/>
</dbReference>
<dbReference type="InterPro" id="IPR025069">
    <property type="entry name" value="Cpsf2_C"/>
</dbReference>
<dbReference type="InterPro" id="IPR035639">
    <property type="entry name" value="CPSF2_MBL"/>
</dbReference>
<dbReference type="InterPro" id="IPR001279">
    <property type="entry name" value="Metallo-B-lactamas"/>
</dbReference>
<dbReference type="InterPro" id="IPR036866">
    <property type="entry name" value="RibonucZ/Hydroxyglut_hydro"/>
</dbReference>
<dbReference type="InterPro" id="IPR011108">
    <property type="entry name" value="RMMBL"/>
</dbReference>
<dbReference type="PANTHER" id="PTHR45922">
    <property type="entry name" value="CLEAVAGE AND POLYADENYLATION SPECIFICITY FACTOR SUBUNIT 2"/>
    <property type="match status" value="1"/>
</dbReference>
<dbReference type="PANTHER" id="PTHR45922:SF1">
    <property type="entry name" value="CLEAVAGE AND POLYADENYLATION SPECIFICITY FACTOR SUBUNIT 2"/>
    <property type="match status" value="1"/>
</dbReference>
<dbReference type="Pfam" id="PF10996">
    <property type="entry name" value="Beta-Casp"/>
    <property type="match status" value="1"/>
</dbReference>
<dbReference type="Pfam" id="PF13299">
    <property type="entry name" value="CPSF100_C"/>
    <property type="match status" value="1"/>
</dbReference>
<dbReference type="Pfam" id="PF16661">
    <property type="entry name" value="Lactamase_B_6"/>
    <property type="match status" value="1"/>
</dbReference>
<dbReference type="Pfam" id="PF07521">
    <property type="entry name" value="RMMBL"/>
    <property type="match status" value="1"/>
</dbReference>
<dbReference type="SMART" id="SM01027">
    <property type="entry name" value="Beta-Casp"/>
    <property type="match status" value="1"/>
</dbReference>
<dbReference type="SMART" id="SM00849">
    <property type="entry name" value="Lactamase_B"/>
    <property type="match status" value="1"/>
</dbReference>
<dbReference type="SUPFAM" id="SSF56281">
    <property type="entry name" value="Metallo-hydrolase/oxidoreductase"/>
    <property type="match status" value="1"/>
</dbReference>
<organism>
    <name type="scientific">Arabidopsis thaliana</name>
    <name type="common">Mouse-ear cress</name>
    <dbReference type="NCBI Taxonomy" id="3702"/>
    <lineage>
        <taxon>Eukaryota</taxon>
        <taxon>Viridiplantae</taxon>
        <taxon>Streptophyta</taxon>
        <taxon>Embryophyta</taxon>
        <taxon>Tracheophyta</taxon>
        <taxon>Spermatophyta</taxon>
        <taxon>Magnoliopsida</taxon>
        <taxon>eudicotyledons</taxon>
        <taxon>Gunneridae</taxon>
        <taxon>Pentapetalae</taxon>
        <taxon>rosids</taxon>
        <taxon>malvids</taxon>
        <taxon>Brassicales</taxon>
        <taxon>Brassicaceae</taxon>
        <taxon>Camelineae</taxon>
        <taxon>Arabidopsis</taxon>
    </lineage>
</organism>
<evidence type="ECO:0000250" key="1">
    <source>
        <dbReference type="UniProtKB" id="O17403"/>
    </source>
</evidence>
<evidence type="ECO:0000256" key="2">
    <source>
        <dbReference type="SAM" id="MobiDB-lite"/>
    </source>
</evidence>
<evidence type="ECO:0000269" key="3">
    <source>
    </source>
</evidence>
<evidence type="ECO:0000269" key="4">
    <source>
    </source>
</evidence>
<evidence type="ECO:0000269" key="5">
    <source>
    </source>
</evidence>
<evidence type="ECO:0000269" key="6">
    <source>
    </source>
</evidence>
<evidence type="ECO:0000303" key="7">
    <source>
    </source>
</evidence>
<evidence type="ECO:0000305" key="8"/>
<evidence type="ECO:0000312" key="9">
    <source>
        <dbReference type="Araport" id="AT5G23880"/>
    </source>
</evidence>
<evidence type="ECO:0000312" key="10">
    <source>
        <dbReference type="EMBL" id="BAB10061.1"/>
    </source>
</evidence>
<sequence>MGTSVQVTPLCGVYNENPLSYLVSIDGFNFLIDCGWNDLFDTSLLEPLSRVASTIDAVLLSHPDTLHIGALPYAMKQLGLSAPVYATEPVHRLGLLTMYDQFLSRKQVSDFDLFTLDDIDSAFQNVIRLTYSQNYHLSGKGEGIVIAPHVAGHMLGGSIWRITKDGEDVIYAVDYNHRKERHLNGTVLQSFVRPAVLITDAYHALYTNQTARQQRDKEFLDTISKHLEVGGNVLLPVDTAGRVLELLLILEQHWSQRGFSFPIYFLTYVSSSTIDYVKSFLEWMSDSISKSFETSRDNAFLLRHVTLLINKTDLDNAPPGPKVVLASMASLEAGFAREIFVEWANDPRNLVLFTETGQFGTLARMLQSAPPPKFVKVTMSKRVPLAGEELIAYEEEQNRLKREEALRASLVKEEETKASHGSDDNSSEPMIIDTKTTHDVIGSHGPAYKDILIDGFVPPSSSVAPMFPYYDNTSEWDDFGEIINPDDYVIKDEDMDRGAMHNGGDVDGRLDEATASLMLDTRPSKVMSNELIVTVSCSLVKMDYEGRSDGRSIKSMIAHVSPLKLVLVHAIAEATEHLKQHCLNNICPHVYAPQIEETVDVTSDLCAYKVQLSEKLMSNVIFKKLGDSEVAWVDSEVGKTERDMRSLLPMPGAASPHKPVLVGDLKIADFKQFLSSKGVQVEFAGGGALRCGEYVTLRKVGPTGQKGGASGPQQILIEGPLCEDYYKIRDYLYSQFYLL</sequence>
<feature type="chain" id="PRO_0000074398" description="Cleavage and polyadenylation specificity factor subunit 2">
    <location>
        <begin position="1"/>
        <end position="739"/>
    </location>
</feature>
<feature type="region of interest" description="Disordered" evidence="2">
    <location>
        <begin position="411"/>
        <end position="430"/>
    </location>
</feature>
<feature type="compositionally biased region" description="Basic and acidic residues" evidence="2">
    <location>
        <begin position="411"/>
        <end position="423"/>
    </location>
</feature>
<feature type="sequence conflict" description="In Ref. 1; AAF82809." evidence="8" ref="1">
    <original>S</original>
    <variation>P</variation>
    <location>
        <position position="49"/>
    </location>
</feature>
<feature type="sequence conflict" description="In Ref. 1; AAF82809." evidence="8" ref="1">
    <original>I</original>
    <variation>V</variation>
    <location>
        <position position="441"/>
    </location>
</feature>
<protein>
    <recommendedName>
        <fullName>Cleavage and polyadenylation specificity factor subunit 2</fullName>
    </recommendedName>
    <alternativeName>
        <fullName>Cleavage and polyadenylation specificity factor 100 kDa subunit</fullName>
        <shortName>AtCPSF100</shortName>
        <shortName>CPSF 100 kDa subunit</shortName>
    </alternativeName>
    <alternativeName>
        <fullName>Protein EMBRYO DEFECTIVE 1265</fullName>
    </alternativeName>
    <alternativeName>
        <fullName evidence="7">Protein ENHANCED SILENCING PHENOTYPE 5</fullName>
    </alternativeName>
</protein>
<keyword id="KW-0963">Cytoplasm</keyword>
<keyword id="KW-0507">mRNA processing</keyword>
<keyword id="KW-0539">Nucleus</keyword>
<keyword id="KW-1185">Reference proteome</keyword>
<keyword id="KW-0694">RNA-binding</keyword>